<accession>Q66II5</accession>
<protein>
    <recommendedName>
        <fullName>Trans-L-3-hydroxyproline dehydratase</fullName>
        <ecNumber>4.2.1.77</ecNumber>
    </recommendedName>
    <alternativeName>
        <fullName>Trans-3-hydroxy-L-proline dehydratase</fullName>
    </alternativeName>
</protein>
<name>T3HPD_XENTR</name>
<dbReference type="EC" id="4.2.1.77"/>
<dbReference type="EMBL" id="BC081335">
    <property type="protein sequence ID" value="AAH81335.1"/>
    <property type="molecule type" value="mRNA"/>
</dbReference>
<dbReference type="RefSeq" id="NP_001008128.1">
    <property type="nucleotide sequence ID" value="NM_001008127.1"/>
</dbReference>
<dbReference type="SMR" id="Q66II5"/>
<dbReference type="FunCoup" id="Q66II5">
    <property type="interactions" value="86"/>
</dbReference>
<dbReference type="STRING" id="8364.ENSXETP00000043966"/>
<dbReference type="PaxDb" id="8364-ENSXETP00000037091"/>
<dbReference type="DNASU" id="493490"/>
<dbReference type="GeneID" id="493490"/>
<dbReference type="KEGG" id="xtr:493490"/>
<dbReference type="AGR" id="Xenbase:XB-GENE-1000732"/>
<dbReference type="CTD" id="112849"/>
<dbReference type="Xenbase" id="XB-GENE-1000732">
    <property type="gene designation" value="l3hypdh"/>
</dbReference>
<dbReference type="eggNOG" id="ENOG502QRPF">
    <property type="taxonomic scope" value="Eukaryota"/>
</dbReference>
<dbReference type="InParanoid" id="Q66II5"/>
<dbReference type="OMA" id="SHVLWTG"/>
<dbReference type="OrthoDB" id="6409228at2759"/>
<dbReference type="Proteomes" id="UP000008143">
    <property type="component" value="Chromosome 8"/>
</dbReference>
<dbReference type="Bgee" id="ENSXETG00000017026">
    <property type="expression patterns" value="Expressed in 4-cell stage embryo and 12 other cell types or tissues"/>
</dbReference>
<dbReference type="GO" id="GO:0016836">
    <property type="term" value="F:hydro-lyase activity"/>
    <property type="evidence" value="ECO:0000250"/>
    <property type="project" value="UniProtKB"/>
</dbReference>
<dbReference type="GO" id="GO:0050346">
    <property type="term" value="F:trans-L-3-hydroxyproline dehydratase activity"/>
    <property type="evidence" value="ECO:0007669"/>
    <property type="project" value="UniProtKB-EC"/>
</dbReference>
<dbReference type="FunFam" id="3.10.310.10:FF:000007">
    <property type="entry name" value="Trans-L-3-hydroxyproline dehydratase"/>
    <property type="match status" value="1"/>
</dbReference>
<dbReference type="Gene3D" id="3.10.310.10">
    <property type="entry name" value="Diaminopimelate Epimerase, Chain A, domain 1"/>
    <property type="match status" value="2"/>
</dbReference>
<dbReference type="InterPro" id="IPR008794">
    <property type="entry name" value="Pro_racemase_fam"/>
</dbReference>
<dbReference type="PANTHER" id="PTHR33442">
    <property type="entry name" value="TRANS-3-HYDROXY-L-PROLINE DEHYDRATASE"/>
    <property type="match status" value="1"/>
</dbReference>
<dbReference type="PANTHER" id="PTHR33442:SF1">
    <property type="entry name" value="TRANS-3-HYDROXY-L-PROLINE DEHYDRATASE"/>
    <property type="match status" value="1"/>
</dbReference>
<dbReference type="Pfam" id="PF05544">
    <property type="entry name" value="Pro_racemase"/>
    <property type="match status" value="1"/>
</dbReference>
<dbReference type="PIRSF" id="PIRSF029792">
    <property type="entry name" value="Pro_racemase"/>
    <property type="match status" value="1"/>
</dbReference>
<dbReference type="SFLD" id="SFLDS00028">
    <property type="entry name" value="Proline_Racemase"/>
    <property type="match status" value="1"/>
</dbReference>
<dbReference type="SUPFAM" id="SSF54506">
    <property type="entry name" value="Diaminopimelate epimerase-like"/>
    <property type="match status" value="1"/>
</dbReference>
<feature type="chain" id="PRO_0000288952" description="Trans-L-3-hydroxyproline dehydratase">
    <location>
        <begin position="1"/>
        <end position="348"/>
    </location>
</feature>
<feature type="active site" description="Proton acceptor" evidence="1">
    <location>
        <position position="101"/>
    </location>
</feature>
<feature type="binding site" evidence="1">
    <location>
        <begin position="102"/>
        <end position="103"/>
    </location>
    <ligand>
        <name>substrate</name>
    </ligand>
</feature>
<feature type="binding site" evidence="1">
    <location>
        <position position="263"/>
    </location>
    <ligand>
        <name>substrate</name>
    </ligand>
</feature>
<feature type="binding site" evidence="1">
    <location>
        <begin position="268"/>
        <end position="269"/>
    </location>
    <ligand>
        <name>substrate</name>
    </ligand>
</feature>
<proteinExistence type="evidence at transcript level"/>
<sequence>MAAPRLPQLPPHDGPMLSVVDMHTGGEPLRIVLSGAPAPEGRTILEKRRWVRENADWLRKVLMFEPRGHRDMYGALLVPGDEEEANIGVLFMHNEGYSTMCGHAIVALGRFAVDYGLVNAAQGPETAVNIQCPCGLIRAYVSYTGGRSGSVRFRSVPAFAFATDVTVDVPGYGKVVVDIAYGGAFYAFVSAETFGLDVCSSRTRDLVDVSAAVTESVKAQVKLNHPDSDDLAFLYGTILTDGKDSYSEEPTANICIFAESQVDRSPTGSGVTARIALQYHKGLIQLEQIRTFKSGATGSLFTGKAVKETLCGNFKAVVVEVSGQAYYTGASSFVIENKDSLKDGFLLK</sequence>
<gene>
    <name type="primary">l3hypdh</name>
</gene>
<organism>
    <name type="scientific">Xenopus tropicalis</name>
    <name type="common">Western clawed frog</name>
    <name type="synonym">Silurana tropicalis</name>
    <dbReference type="NCBI Taxonomy" id="8364"/>
    <lineage>
        <taxon>Eukaryota</taxon>
        <taxon>Metazoa</taxon>
        <taxon>Chordata</taxon>
        <taxon>Craniata</taxon>
        <taxon>Vertebrata</taxon>
        <taxon>Euteleostomi</taxon>
        <taxon>Amphibia</taxon>
        <taxon>Batrachia</taxon>
        <taxon>Anura</taxon>
        <taxon>Pipoidea</taxon>
        <taxon>Pipidae</taxon>
        <taxon>Xenopodinae</taxon>
        <taxon>Xenopus</taxon>
        <taxon>Silurana</taxon>
    </lineage>
</organism>
<reference key="1">
    <citation type="submission" date="2004-08" db="EMBL/GenBank/DDBJ databases">
        <authorList>
            <consortium name="NIH - Xenopus Gene Collection (XGC) project"/>
        </authorList>
    </citation>
    <scope>NUCLEOTIDE SEQUENCE [LARGE SCALE MRNA]</scope>
    <source>
        <tissue>Embryo</tissue>
    </source>
</reference>
<evidence type="ECO:0000250" key="1"/>
<evidence type="ECO:0000305" key="2"/>
<comment type="function">
    <text evidence="1">Catalyzes the dehydration of trans-3-hydroxy-L-proline to delta-1-pyrroline-2-carboxylate (Pyr2C).</text>
</comment>
<comment type="catalytic activity">
    <reaction>
        <text>trans-3-hydroxy-L-proline = 1-pyrroline-2-carboxylate + H2O</text>
        <dbReference type="Rhea" id="RHEA:10320"/>
        <dbReference type="ChEBI" id="CHEBI:15377"/>
        <dbReference type="ChEBI" id="CHEBI:39785"/>
        <dbReference type="ChEBI" id="CHEBI:57938"/>
        <dbReference type="EC" id="4.2.1.77"/>
    </reaction>
</comment>
<comment type="subunit">
    <text evidence="1">Homodimer.</text>
</comment>
<comment type="miscellaneous">
    <text evidence="1">In contrast to the T.cruzi proline racemase enzyme, lacks the conserved Cys at position 267 which is replaced by a Thr residue, transforming the racemase activity into dehydratase activity.</text>
</comment>
<comment type="similarity">
    <text evidence="2">Belongs to the proline racemase family.</text>
</comment>
<keyword id="KW-0456">Lyase</keyword>
<keyword id="KW-1185">Reference proteome</keyword>